<name>RS11_STAAS</name>
<gene>
    <name evidence="1" type="primary">rpsK</name>
    <name type="ordered locus">SAS2116</name>
</gene>
<feature type="chain" id="PRO_0000123222" description="Small ribosomal subunit protein uS11">
    <location>
        <begin position="1"/>
        <end position="129"/>
    </location>
</feature>
<evidence type="ECO:0000255" key="1">
    <source>
        <dbReference type="HAMAP-Rule" id="MF_01310"/>
    </source>
</evidence>
<evidence type="ECO:0000305" key="2"/>
<keyword id="KW-0687">Ribonucleoprotein</keyword>
<keyword id="KW-0689">Ribosomal protein</keyword>
<keyword id="KW-0694">RNA-binding</keyword>
<keyword id="KW-0699">rRNA-binding</keyword>
<comment type="function">
    <text evidence="1">Located on the platform of the 30S subunit, it bridges several disparate RNA helices of the 16S rRNA. Forms part of the Shine-Dalgarno cleft in the 70S ribosome.</text>
</comment>
<comment type="subunit">
    <text evidence="1">Part of the 30S ribosomal subunit. Interacts with proteins S7 and S18. Binds to IF-3.</text>
</comment>
<comment type="similarity">
    <text evidence="1">Belongs to the universal ribosomal protein uS11 family.</text>
</comment>
<sequence length="129" mass="13882">MARKQVSRKRRVKKNIENGVAHIRSTFNNTIVTITDEFGNALSWSSAGALGFKGSKKSTPFAAQMASETASKSAMEHGLKTVEVTVKGPGPGRESAIRALQSAGLEVTAIRDVTPVPHNGCRPPKRRRV</sequence>
<protein>
    <recommendedName>
        <fullName evidence="1">Small ribosomal subunit protein uS11</fullName>
    </recommendedName>
    <alternativeName>
        <fullName evidence="2">30S ribosomal protein S11</fullName>
    </alternativeName>
</protein>
<proteinExistence type="inferred from homology"/>
<accession>Q6G796</accession>
<reference key="1">
    <citation type="journal article" date="2004" name="Proc. Natl. Acad. Sci. U.S.A.">
        <title>Complete genomes of two clinical Staphylococcus aureus strains: evidence for the rapid evolution of virulence and drug resistance.</title>
        <authorList>
            <person name="Holden M.T.G."/>
            <person name="Feil E.J."/>
            <person name="Lindsay J.A."/>
            <person name="Peacock S.J."/>
            <person name="Day N.P.J."/>
            <person name="Enright M.C."/>
            <person name="Foster T.J."/>
            <person name="Moore C.E."/>
            <person name="Hurst L."/>
            <person name="Atkin R."/>
            <person name="Barron A."/>
            <person name="Bason N."/>
            <person name="Bentley S.D."/>
            <person name="Chillingworth C."/>
            <person name="Chillingworth T."/>
            <person name="Churcher C."/>
            <person name="Clark L."/>
            <person name="Corton C."/>
            <person name="Cronin A."/>
            <person name="Doggett J."/>
            <person name="Dowd L."/>
            <person name="Feltwell T."/>
            <person name="Hance Z."/>
            <person name="Harris B."/>
            <person name="Hauser H."/>
            <person name="Holroyd S."/>
            <person name="Jagels K."/>
            <person name="James K.D."/>
            <person name="Lennard N."/>
            <person name="Line A."/>
            <person name="Mayes R."/>
            <person name="Moule S."/>
            <person name="Mungall K."/>
            <person name="Ormond D."/>
            <person name="Quail M.A."/>
            <person name="Rabbinowitsch E."/>
            <person name="Rutherford K.M."/>
            <person name="Sanders M."/>
            <person name="Sharp S."/>
            <person name="Simmonds M."/>
            <person name="Stevens K."/>
            <person name="Whitehead S."/>
            <person name="Barrell B.G."/>
            <person name="Spratt B.G."/>
            <person name="Parkhill J."/>
        </authorList>
    </citation>
    <scope>NUCLEOTIDE SEQUENCE [LARGE SCALE GENOMIC DNA]</scope>
    <source>
        <strain>MSSA476</strain>
    </source>
</reference>
<dbReference type="EMBL" id="BX571857">
    <property type="protein sequence ID" value="CAG43927.1"/>
    <property type="molecule type" value="Genomic_DNA"/>
</dbReference>
<dbReference type="RefSeq" id="WP_000101625.1">
    <property type="nucleotide sequence ID" value="NC_002953.3"/>
</dbReference>
<dbReference type="SMR" id="Q6G796"/>
<dbReference type="GeneID" id="98346537"/>
<dbReference type="KEGG" id="sas:SAS2116"/>
<dbReference type="HOGENOM" id="CLU_072439_5_0_9"/>
<dbReference type="GO" id="GO:1990904">
    <property type="term" value="C:ribonucleoprotein complex"/>
    <property type="evidence" value="ECO:0007669"/>
    <property type="project" value="UniProtKB-KW"/>
</dbReference>
<dbReference type="GO" id="GO:0005840">
    <property type="term" value="C:ribosome"/>
    <property type="evidence" value="ECO:0007669"/>
    <property type="project" value="UniProtKB-KW"/>
</dbReference>
<dbReference type="GO" id="GO:0019843">
    <property type="term" value="F:rRNA binding"/>
    <property type="evidence" value="ECO:0007669"/>
    <property type="project" value="UniProtKB-UniRule"/>
</dbReference>
<dbReference type="GO" id="GO:0003735">
    <property type="term" value="F:structural constituent of ribosome"/>
    <property type="evidence" value="ECO:0007669"/>
    <property type="project" value="InterPro"/>
</dbReference>
<dbReference type="GO" id="GO:0006412">
    <property type="term" value="P:translation"/>
    <property type="evidence" value="ECO:0007669"/>
    <property type="project" value="UniProtKB-UniRule"/>
</dbReference>
<dbReference type="FunFam" id="3.30.420.80:FF:000001">
    <property type="entry name" value="30S ribosomal protein S11"/>
    <property type="match status" value="1"/>
</dbReference>
<dbReference type="Gene3D" id="3.30.420.80">
    <property type="entry name" value="Ribosomal protein S11"/>
    <property type="match status" value="1"/>
</dbReference>
<dbReference type="HAMAP" id="MF_01310">
    <property type="entry name" value="Ribosomal_uS11"/>
    <property type="match status" value="1"/>
</dbReference>
<dbReference type="InterPro" id="IPR001971">
    <property type="entry name" value="Ribosomal_uS11"/>
</dbReference>
<dbReference type="InterPro" id="IPR019981">
    <property type="entry name" value="Ribosomal_uS11_bac-type"/>
</dbReference>
<dbReference type="InterPro" id="IPR018102">
    <property type="entry name" value="Ribosomal_uS11_CS"/>
</dbReference>
<dbReference type="InterPro" id="IPR036967">
    <property type="entry name" value="Ribosomal_uS11_sf"/>
</dbReference>
<dbReference type="NCBIfam" id="NF003698">
    <property type="entry name" value="PRK05309.1"/>
    <property type="match status" value="1"/>
</dbReference>
<dbReference type="NCBIfam" id="TIGR03632">
    <property type="entry name" value="uS11_bact"/>
    <property type="match status" value="1"/>
</dbReference>
<dbReference type="PANTHER" id="PTHR11759">
    <property type="entry name" value="40S RIBOSOMAL PROTEIN S14/30S RIBOSOMAL PROTEIN S11"/>
    <property type="match status" value="1"/>
</dbReference>
<dbReference type="Pfam" id="PF00411">
    <property type="entry name" value="Ribosomal_S11"/>
    <property type="match status" value="1"/>
</dbReference>
<dbReference type="PIRSF" id="PIRSF002131">
    <property type="entry name" value="Ribosomal_S11"/>
    <property type="match status" value="1"/>
</dbReference>
<dbReference type="SUPFAM" id="SSF53137">
    <property type="entry name" value="Translational machinery components"/>
    <property type="match status" value="1"/>
</dbReference>
<dbReference type="PROSITE" id="PS00054">
    <property type="entry name" value="RIBOSOMAL_S11"/>
    <property type="match status" value="1"/>
</dbReference>
<organism>
    <name type="scientific">Staphylococcus aureus (strain MSSA476)</name>
    <dbReference type="NCBI Taxonomy" id="282459"/>
    <lineage>
        <taxon>Bacteria</taxon>
        <taxon>Bacillati</taxon>
        <taxon>Bacillota</taxon>
        <taxon>Bacilli</taxon>
        <taxon>Bacillales</taxon>
        <taxon>Staphylococcaceae</taxon>
        <taxon>Staphylococcus</taxon>
    </lineage>
</organism>